<comment type="function">
    <text evidence="1">Catalytic subunit of DNA primase, an RNA polymerase that catalyzes the synthesis of short RNA molecules used as primers for DNA polymerase during DNA replication. The small subunit contains the primase catalytic core and has DNA synthesis activity on its own. Binding to the large subunit stabilizes and modulates the activity, increasing the rate of DNA synthesis while decreasing the length of the DNA fragments, and conferring RNA synthesis capability. The DNA polymerase activity may enable DNA primase to also catalyze primer extension after primer synthesis. May also play a role in DNA repair.</text>
</comment>
<comment type="cofactor">
    <cofactor evidence="1">
        <name>Mg(2+)</name>
        <dbReference type="ChEBI" id="CHEBI:18420"/>
    </cofactor>
    <cofactor evidence="1">
        <name>Mn(2+)</name>
        <dbReference type="ChEBI" id="CHEBI:29035"/>
    </cofactor>
</comment>
<comment type="subunit">
    <text evidence="1">Heterodimer of a small subunit (PriS) and a large subunit (PriL).</text>
</comment>
<comment type="similarity">
    <text evidence="1">Belongs to the eukaryotic-type primase small subunit family.</text>
</comment>
<protein>
    <recommendedName>
        <fullName evidence="1">DNA primase small subunit PriS</fullName>
        <ecNumber evidence="1">2.7.7.-</ecNumber>
    </recommendedName>
</protein>
<proteinExistence type="inferred from homology"/>
<feature type="chain" id="PRO_1000045505" description="DNA primase small subunit PriS">
    <location>
        <begin position="1"/>
        <end position="363"/>
    </location>
</feature>
<feature type="active site" evidence="1">
    <location>
        <position position="105"/>
    </location>
</feature>
<feature type="active site" evidence="1">
    <location>
        <position position="107"/>
    </location>
</feature>
<feature type="active site" evidence="1">
    <location>
        <position position="265"/>
    </location>
</feature>
<gene>
    <name evidence="1" type="primary">priS</name>
    <name type="synonym">priA</name>
    <name type="ordered locus">MmarC7_1070</name>
</gene>
<accession>A6VI60</accession>
<name>PRIS_METM7</name>
<dbReference type="EC" id="2.7.7.-" evidence="1"/>
<dbReference type="EMBL" id="CP000745">
    <property type="protein sequence ID" value="ABR66136.1"/>
    <property type="molecule type" value="Genomic_DNA"/>
</dbReference>
<dbReference type="SMR" id="A6VI60"/>
<dbReference type="STRING" id="426368.MmarC7_1070"/>
<dbReference type="KEGG" id="mmz:MmarC7_1070"/>
<dbReference type="eggNOG" id="arCOG04110">
    <property type="taxonomic scope" value="Archaea"/>
</dbReference>
<dbReference type="HOGENOM" id="CLU_056123_1_0_2"/>
<dbReference type="OrthoDB" id="31125at2157"/>
<dbReference type="GO" id="GO:0000428">
    <property type="term" value="C:DNA-directed RNA polymerase complex"/>
    <property type="evidence" value="ECO:0007669"/>
    <property type="project" value="UniProtKB-KW"/>
</dbReference>
<dbReference type="GO" id="GO:1990077">
    <property type="term" value="C:primosome complex"/>
    <property type="evidence" value="ECO:0007669"/>
    <property type="project" value="UniProtKB-KW"/>
</dbReference>
<dbReference type="GO" id="GO:0003899">
    <property type="term" value="F:DNA-directed RNA polymerase activity"/>
    <property type="evidence" value="ECO:0007669"/>
    <property type="project" value="InterPro"/>
</dbReference>
<dbReference type="GO" id="GO:0046872">
    <property type="term" value="F:metal ion binding"/>
    <property type="evidence" value="ECO:0007669"/>
    <property type="project" value="UniProtKB-KW"/>
</dbReference>
<dbReference type="GO" id="GO:0006269">
    <property type="term" value="P:DNA replication, synthesis of primer"/>
    <property type="evidence" value="ECO:0007669"/>
    <property type="project" value="UniProtKB-UniRule"/>
</dbReference>
<dbReference type="CDD" id="cd04860">
    <property type="entry name" value="AE_Prim_S"/>
    <property type="match status" value="1"/>
</dbReference>
<dbReference type="Gene3D" id="3.90.920.10">
    <property type="entry name" value="DNA primase, PRIM domain"/>
    <property type="match status" value="1"/>
</dbReference>
<dbReference type="HAMAP" id="MF_00700">
    <property type="entry name" value="DNA_primase_sml_arc"/>
    <property type="match status" value="1"/>
</dbReference>
<dbReference type="InterPro" id="IPR002755">
    <property type="entry name" value="DNA_primase_S"/>
</dbReference>
<dbReference type="InterPro" id="IPR014052">
    <property type="entry name" value="DNA_primase_ssu_euk/arc"/>
</dbReference>
<dbReference type="InterPro" id="IPR023639">
    <property type="entry name" value="DNA_primase_ssu_PriS"/>
</dbReference>
<dbReference type="NCBIfam" id="TIGR00335">
    <property type="entry name" value="primase_sml"/>
    <property type="match status" value="1"/>
</dbReference>
<dbReference type="PANTHER" id="PTHR10536">
    <property type="entry name" value="DNA PRIMASE SMALL SUBUNIT"/>
    <property type="match status" value="1"/>
</dbReference>
<dbReference type="Pfam" id="PF01896">
    <property type="entry name" value="DNA_primase_S"/>
    <property type="match status" value="1"/>
</dbReference>
<dbReference type="SUPFAM" id="SSF56747">
    <property type="entry name" value="Prim-pol domain"/>
    <property type="match status" value="1"/>
</dbReference>
<reference key="1">
    <citation type="submission" date="2007-06" db="EMBL/GenBank/DDBJ databases">
        <title>Complete sequence of Methanococcus maripaludis C7.</title>
        <authorList>
            <consortium name="US DOE Joint Genome Institute"/>
            <person name="Copeland A."/>
            <person name="Lucas S."/>
            <person name="Lapidus A."/>
            <person name="Barry K."/>
            <person name="Glavina del Rio T."/>
            <person name="Dalin E."/>
            <person name="Tice H."/>
            <person name="Pitluck S."/>
            <person name="Clum A."/>
            <person name="Schmutz J."/>
            <person name="Larimer F."/>
            <person name="Land M."/>
            <person name="Hauser L."/>
            <person name="Kyrpides N."/>
            <person name="Anderson I."/>
            <person name="Sieprawska-Lupa M."/>
            <person name="Whitman W.B."/>
            <person name="Richardson P."/>
        </authorList>
    </citation>
    <scope>NUCLEOTIDE SEQUENCE [LARGE SCALE GENOMIC DNA]</scope>
    <source>
        <strain>C7 / ATCC BAA-1331</strain>
    </source>
</reference>
<sequence>MTDNPADNKVFNEVSSLYKQYFDYAINVRKWLEIPDDLPHREIGYGMLKKVDNRNMSFNTNGEYLAWVLKESPFHLYKSLSYMEYPDVVGGAAKKGLIKREVAFDIDTHKTEKCTHDDSWICEECLGEARNQVLILIEDFLFPDFGLSEKDLKIVFTGNRGYHIYLKPEDTKKIGDTKLLEKIEKWEKNERRYFIEYILGKNLNLRNMGSRWKNILIREFKKNKISTKKFEKTSDWKTEIDTRKDNVRREIYETIGKVKSRLELDEKVMDDDIRLLRTIGSLHGYTGLMVKEITYSSLKSNQFDPLNHGVFSKFHKIMYNVNIKQEIDPLTLKGDTFDHKSTEIPASYLLFLFGHGIDFEILE</sequence>
<evidence type="ECO:0000255" key="1">
    <source>
        <dbReference type="HAMAP-Rule" id="MF_00700"/>
    </source>
</evidence>
<organism>
    <name type="scientific">Methanococcus maripaludis (strain C7 / ATCC BAA-1331)</name>
    <dbReference type="NCBI Taxonomy" id="426368"/>
    <lineage>
        <taxon>Archaea</taxon>
        <taxon>Methanobacteriati</taxon>
        <taxon>Methanobacteriota</taxon>
        <taxon>Methanomada group</taxon>
        <taxon>Methanococci</taxon>
        <taxon>Methanococcales</taxon>
        <taxon>Methanococcaceae</taxon>
        <taxon>Methanococcus</taxon>
    </lineage>
</organism>
<keyword id="KW-0235">DNA replication</keyword>
<keyword id="KW-0240">DNA-directed RNA polymerase</keyword>
<keyword id="KW-0460">Magnesium</keyword>
<keyword id="KW-0464">Manganese</keyword>
<keyword id="KW-0479">Metal-binding</keyword>
<keyword id="KW-0548">Nucleotidyltransferase</keyword>
<keyword id="KW-0639">Primosome</keyword>
<keyword id="KW-0804">Transcription</keyword>
<keyword id="KW-0808">Transferase</keyword>